<proteinExistence type="evidence at protein level"/>
<accession>A0A0A0MS01</accession>
<organism>
    <name type="scientific">Homo sapiens</name>
    <name type="common">Human</name>
    <dbReference type="NCBI Taxonomy" id="9606"/>
    <lineage>
        <taxon>Eukaryota</taxon>
        <taxon>Metazoa</taxon>
        <taxon>Chordata</taxon>
        <taxon>Craniata</taxon>
        <taxon>Vertebrata</taxon>
        <taxon>Euteleostomi</taxon>
        <taxon>Mammalia</taxon>
        <taxon>Eutheria</taxon>
        <taxon>Euarchontoglires</taxon>
        <taxon>Primates</taxon>
        <taxon>Haplorrhini</taxon>
        <taxon>Catarrhini</taxon>
        <taxon>Hominidae</taxon>
        <taxon>Homo</taxon>
    </lineage>
</organism>
<dbReference type="EMBL" id="AC006033">
    <property type="status" value="NOT_ANNOTATED_CDS"/>
    <property type="molecule type" value="Genomic_DNA"/>
</dbReference>
<dbReference type="SMR" id="A0A0A0MS01"/>
<dbReference type="FunCoup" id="A0A0A0MS01">
    <property type="interactions" value="288"/>
</dbReference>
<dbReference type="BioMuta" id="TRGV10"/>
<dbReference type="ABCD" id="A0A0A0MS01">
    <property type="antibodies" value="9 sequenced antibodies"/>
</dbReference>
<dbReference type="Ensembl" id="ENST00000390341.3">
    <property type="protein sequence ID" value="ENSP00000374864.3"/>
    <property type="gene ID" value="ENSG00000211694.3"/>
</dbReference>
<dbReference type="UCSC" id="uc003tgl.4">
    <property type="organism name" value="human"/>
</dbReference>
<dbReference type="AGR" id="HGNC:12285"/>
<dbReference type="GeneCards" id="TRGV10"/>
<dbReference type="HGNC" id="HGNC:12285">
    <property type="gene designation" value="TRGV10"/>
</dbReference>
<dbReference type="HPA" id="ENSG00000211694">
    <property type="expression patterns" value="Tissue enhanced (bone marrow, lymphoid tissue)"/>
</dbReference>
<dbReference type="neXtProt" id="NX_A0A0A0MS01"/>
<dbReference type="VEuPathDB" id="HostDB:ENSG00000211694"/>
<dbReference type="HOGENOM" id="CLU_077975_7_0_1"/>
<dbReference type="InParanoid" id="A0A0A0MS01"/>
<dbReference type="OrthoDB" id="8924181at2759"/>
<dbReference type="PAN-GO" id="A0A0A0MS01">
    <property type="GO annotations" value="1 GO annotation based on evolutionary models"/>
</dbReference>
<dbReference type="PhylomeDB" id="A0A0A0MS01"/>
<dbReference type="SignaLink" id="A0A0A0MS01"/>
<dbReference type="PRO" id="PR:A0A0A0MS01"/>
<dbReference type="Proteomes" id="UP000005640">
    <property type="component" value="Chromosome 7"/>
</dbReference>
<dbReference type="RNAct" id="A0A0A0MS01">
    <property type="molecule type" value="protein"/>
</dbReference>
<dbReference type="Bgee" id="ENSG00000211694">
    <property type="expression patterns" value="Expressed in male germ line stem cell (sensu Vertebrata) in testis and 86 other cell types or tissues"/>
</dbReference>
<dbReference type="GO" id="GO:0009897">
    <property type="term" value="C:external side of plasma membrane"/>
    <property type="evidence" value="ECO:0000318"/>
    <property type="project" value="GO_Central"/>
</dbReference>
<dbReference type="GO" id="GO:0042101">
    <property type="term" value="C:T cell receptor complex"/>
    <property type="evidence" value="ECO:0007669"/>
    <property type="project" value="UniProtKB-KW"/>
</dbReference>
<dbReference type="GO" id="GO:0002250">
    <property type="term" value="P:adaptive immune response"/>
    <property type="evidence" value="ECO:0007669"/>
    <property type="project" value="UniProtKB-KW"/>
</dbReference>
<dbReference type="FunFam" id="2.60.40.10:FF:001649">
    <property type="entry name" value="T cell receptor gamma, variable 3"/>
    <property type="match status" value="1"/>
</dbReference>
<dbReference type="Gene3D" id="2.60.40.10">
    <property type="entry name" value="Immunoglobulins"/>
    <property type="match status" value="1"/>
</dbReference>
<dbReference type="InterPro" id="IPR007110">
    <property type="entry name" value="Ig-like_dom"/>
</dbReference>
<dbReference type="InterPro" id="IPR036179">
    <property type="entry name" value="Ig-like_dom_sf"/>
</dbReference>
<dbReference type="InterPro" id="IPR013783">
    <property type="entry name" value="Ig-like_fold"/>
</dbReference>
<dbReference type="InterPro" id="IPR013106">
    <property type="entry name" value="Ig_V-set"/>
</dbReference>
<dbReference type="InterPro" id="IPR051117">
    <property type="entry name" value="TRG_var/const_region"/>
</dbReference>
<dbReference type="PANTHER" id="PTHR19256:SF40">
    <property type="entry name" value="NON-FUNCTIONAL T CELL RECEPTOR GAMMA VARIABLE 10-RELATED"/>
    <property type="match status" value="1"/>
</dbReference>
<dbReference type="PANTHER" id="PTHR19256">
    <property type="entry name" value="T-CELL RECEPTOR GAMMA CHAIN"/>
    <property type="match status" value="1"/>
</dbReference>
<dbReference type="Pfam" id="PF07686">
    <property type="entry name" value="V-set"/>
    <property type="match status" value="1"/>
</dbReference>
<dbReference type="SMART" id="SM00406">
    <property type="entry name" value="IGv"/>
    <property type="match status" value="1"/>
</dbReference>
<dbReference type="SUPFAM" id="SSF48726">
    <property type="entry name" value="Immunoglobulin"/>
    <property type="match status" value="1"/>
</dbReference>
<dbReference type="PROSITE" id="PS50835">
    <property type="entry name" value="IG_LIKE"/>
    <property type="match status" value="1"/>
</dbReference>
<reference key="1">
    <citation type="journal article" date="2003" name="Nature">
        <title>The DNA sequence of human chromosome 7.</title>
        <authorList>
            <person name="Hillier L.W."/>
            <person name="Fulton R.S."/>
            <person name="Fulton L.A."/>
            <person name="Graves T.A."/>
            <person name="Pepin K.H."/>
            <person name="Wagner-McPherson C."/>
            <person name="Layman D."/>
            <person name="Maas J."/>
            <person name="Jaeger S."/>
            <person name="Walker R."/>
            <person name="Wylie K."/>
            <person name="Sekhon M."/>
            <person name="Becker M.C."/>
            <person name="O'Laughlin M.D."/>
            <person name="Schaller M.E."/>
            <person name="Fewell G.A."/>
            <person name="Delehaunty K.D."/>
            <person name="Miner T.L."/>
            <person name="Nash W.E."/>
            <person name="Cordes M."/>
            <person name="Du H."/>
            <person name="Sun H."/>
            <person name="Edwards J."/>
            <person name="Bradshaw-Cordum H."/>
            <person name="Ali J."/>
            <person name="Andrews S."/>
            <person name="Isak A."/>
            <person name="Vanbrunt A."/>
            <person name="Nguyen C."/>
            <person name="Du F."/>
            <person name="Lamar B."/>
            <person name="Courtney L."/>
            <person name="Kalicki J."/>
            <person name="Ozersky P."/>
            <person name="Bielicki L."/>
            <person name="Scott K."/>
            <person name="Holmes A."/>
            <person name="Harkins R."/>
            <person name="Harris A."/>
            <person name="Strong C.M."/>
            <person name="Hou S."/>
            <person name="Tomlinson C."/>
            <person name="Dauphin-Kohlberg S."/>
            <person name="Kozlowicz-Reilly A."/>
            <person name="Leonard S."/>
            <person name="Rohlfing T."/>
            <person name="Rock S.M."/>
            <person name="Tin-Wollam A.-M."/>
            <person name="Abbott A."/>
            <person name="Minx P."/>
            <person name="Maupin R."/>
            <person name="Strowmatt C."/>
            <person name="Latreille P."/>
            <person name="Miller N."/>
            <person name="Johnson D."/>
            <person name="Murray J."/>
            <person name="Woessner J.P."/>
            <person name="Wendl M.C."/>
            <person name="Yang S.-P."/>
            <person name="Schultz B.R."/>
            <person name="Wallis J.W."/>
            <person name="Spieth J."/>
            <person name="Bieri T.A."/>
            <person name="Nelson J.O."/>
            <person name="Berkowicz N."/>
            <person name="Wohldmann P.E."/>
            <person name="Cook L.L."/>
            <person name="Hickenbotham M.T."/>
            <person name="Eldred J."/>
            <person name="Williams D."/>
            <person name="Bedell J.A."/>
            <person name="Mardis E.R."/>
            <person name="Clifton S.W."/>
            <person name="Chissoe S.L."/>
            <person name="Marra M.A."/>
            <person name="Raymond C."/>
            <person name="Haugen E."/>
            <person name="Gillett W."/>
            <person name="Zhou Y."/>
            <person name="James R."/>
            <person name="Phelps K."/>
            <person name="Iadanoto S."/>
            <person name="Bubb K."/>
            <person name="Simms E."/>
            <person name="Levy R."/>
            <person name="Clendenning J."/>
            <person name="Kaul R."/>
            <person name="Kent W.J."/>
            <person name="Furey T.S."/>
            <person name="Baertsch R.A."/>
            <person name="Brent M.R."/>
            <person name="Keibler E."/>
            <person name="Flicek P."/>
            <person name="Bork P."/>
            <person name="Suyama M."/>
            <person name="Bailey J.A."/>
            <person name="Portnoy M.E."/>
            <person name="Torrents D."/>
            <person name="Chinwalla A.T."/>
            <person name="Gish W.R."/>
            <person name="Eddy S.R."/>
            <person name="McPherson J.D."/>
            <person name="Olson M.V."/>
            <person name="Eichler E.E."/>
            <person name="Green E.D."/>
            <person name="Waterston R.H."/>
            <person name="Wilson R.K."/>
        </authorList>
    </citation>
    <scope>NUCLEOTIDE SEQUENCE [LARGE SCALE GENOMIC DNA] (IMGT ALLELE TRGV10*01)</scope>
</reference>
<reference key="2">
    <citation type="journal article" date="1998" name="Exp. Clin. Immunogenet.">
        <title>IMGT (ImMunoGeneTics) locus on focus. A new section of Experimental and Clinical Immunogenetics.</title>
        <authorList>
            <person name="Lefranc M.P."/>
        </authorList>
    </citation>
    <scope>CHARACTERIZATION</scope>
</reference>
<reference key="3">
    <citation type="book" date="2001" name="The T Cell Receptor FactsBook.">
        <title>The T Cell Receptor FactsBook.</title>
        <editorList>
            <person name="Lefranc M.P."/>
            <person name="Lefranc G."/>
        </editorList>
        <authorList>
            <person name="Lefranc M.P."/>
            <person name="Lefranc G."/>
        </authorList>
    </citation>
    <scope>NOMENCLATURE</scope>
</reference>
<reference key="4">
    <citation type="journal article" date="2013" name="Nat. Rev. Immunol.">
        <title>Six-of-the-best: unique contributions of gammadelta T cells to immunology.</title>
        <authorList>
            <person name="Vantourout P."/>
            <person name="Hayday A."/>
        </authorList>
    </citation>
    <scope>REVIEW ON FUNCTION AND ANTIGEN RECOGNITION</scope>
</reference>
<reference key="5">
    <citation type="journal article" date="2014" name="Annu. Rev. Immunol.">
        <title>gammadelta T cells: first line of defense and beyond.</title>
        <authorList>
            <person name="Chien Y.H."/>
            <person name="Meyer C."/>
            <person name="Bonneville M."/>
        </authorList>
    </citation>
    <scope>REVIEW ONGAMMA DELTA T CELL RECEPTOR DIVERSITY</scope>
</reference>
<reference key="6">
    <citation type="journal article" date="2014" name="Front. Immunol.">
        <title>Immunoglobulin and T Cell Receptor Genes: IMGT((R)) and the Birth and Rise of Immunoinformatics.</title>
        <authorList>
            <person name="Lefranc M.P."/>
        </authorList>
    </citation>
    <scope>NOMENCLATURE</scope>
</reference>
<reference key="7">
    <citation type="journal article" date="2015" name="Front. Immunol.">
        <title>Five Layers of Receptor Signaling in gammadelta T-Cell Differentiation and Activation.</title>
        <authorList>
            <person name="Ribeiro S.T."/>
            <person name="Ribot J.C."/>
            <person name="Silva-Santos B."/>
        </authorList>
    </citation>
    <scope>REVIEW ON T CELL RECEPTOR SIGNALING</scope>
    <scope>SUBUNIT</scope>
</reference>
<reference key="8">
    <citation type="journal article" date="2017" name="Nat. Rev. Immunol.">
        <title>gammadelta T cells in homeostasis and host defence of epithelial barrier tissues.</title>
        <authorList>
            <person name="Nielsen M.M."/>
            <person name="Witherden D.A."/>
            <person name="Havran W.L."/>
        </authorList>
    </citation>
    <scope>REVIEW ON FUNCTION</scope>
</reference>
<gene>
    <name evidence="9 11" type="primary">TRGV10</name>
</gene>
<keyword id="KW-1064">Adaptive immunity</keyword>
<keyword id="KW-1003">Cell membrane</keyword>
<keyword id="KW-1015">Disulfide bond</keyword>
<keyword id="KW-0391">Immunity</keyword>
<keyword id="KW-0393">Immunoglobulin domain</keyword>
<keyword id="KW-0472">Membrane</keyword>
<keyword id="KW-0675">Receptor</keyword>
<keyword id="KW-1185">Reference proteome</keyword>
<keyword id="KW-0732">Signal</keyword>
<keyword id="KW-1279">T cell receptor</keyword>
<name>TVG10_HUMAN</name>
<comment type="function">
    <text evidence="3 4 5 6 7">Probable non-functional open reading frame (ORF) of V region of the variable domain of T cell receptor (TR) gamma chain (PubMed:24600447). Non-functional ORF generally cannot participate in the synthesis of a productive T cell receptor (TR) chain due to altered V-(D)-J or switch recombination and/or splicing site (at mRNA level) and/or conserved amino acid change (protein level) (PubMed:9619395). Gamma-delta TRs recognize a variety of self and foreign non-peptide antigens frequently expressed at the epithelial boundaries between the host and external environment, including endogenous lipids presented by MH-like protein CD1D and phosphoantigens presented by butyrophilin-like molecule BTN3A1. Upon antigen recognition induces rapid, innate-like immune responses involved in pathogen clearance and tissue repair (PubMed:23348415, PubMed:28920588). Binding of gamma-delta TR complex to antigen triggers phosphorylation of immunoreceptor tyrosine-based activation motifs (ITAMs) in the CD3 chains by the LCK and FYN kinases, allowing the recruitment, phosphorylation, and activation of ZAP70 that facilitates phosphorylation of the scaffolding proteins LCP2 and LAT. This lead to the formation of a supramolecular signalosome that recruits the phospholipase PLCG1, resulting in calcium mobilization and ERK activation, ultimately leading to T cell expansion and differentiation into effector cells (PubMed:25674089). Gamma-delta TRs are produced through somatic rearrangement of a limited repertoire of variable (V), diversity (D), and joining (J) genes. The potential diversity of gamma-delta TRs is conferred by the unique ability to rearrange (D) genes in tandem and to utilize all three reading frames. The combinatorial diversity is considerably increased by the sequence exonuclease trimming and random nucleotide (N) region additions which occur during the V-(D)-J rearrangements (PubMed:24387714).</text>
</comment>
<comment type="subunit">
    <text evidence="6">Gamma-delta TR is a heterodimer composed of a gamma and delta chain; disulfide-linked. The gamma-delta TR is associated with the transmembrane signaling CD3 coreceptor proteins following the stoichiometry: a single gamma-delta TR heterodimer associates with one CD3D-CD3E heterodimer, one CD3G-CD3E heterodimer and one CD247 homodimer forming a stable octameric structure. Upon activation, gamma-delta TR complex associates with FCER1G to initiate intracellular signaling.</text>
</comment>
<comment type="subcellular location">
    <subcellularLocation>
        <location evidence="10">Cell membrane</location>
    </subcellularLocation>
</comment>
<comment type="polymorphism">
    <text evidence="10">There are several alleles. The sequence shown is that of IMGT allele TRGV10*01.</text>
</comment>
<comment type="caution">
    <text evidence="8 10">Most probably a non-functional protein that cannot participate to the synthesis of a productive T cell receptor (TR) chain due to an altered splicing site (PubMed:9619395).</text>
</comment>
<protein>
    <recommendedName>
        <fullName evidence="10">Probable non-functional T cell receptor gamma variable 10</fullName>
    </recommendedName>
</protein>
<feature type="signal peptide" evidence="1">
    <location>
        <begin position="1"/>
        <end position="19"/>
    </location>
</feature>
<feature type="chain" id="PRO_0000450773" description="Probable non-functional T cell receptor gamma variable 10" evidence="1">
    <location>
        <begin position="20"/>
        <end position="119"/>
    </location>
</feature>
<feature type="domain" description="Ig-like" evidence="2">
    <location>
        <begin position="24"/>
        <end position="119" status="greater than"/>
    </location>
</feature>
<feature type="disulfide bond" evidence="2">
    <location>
        <begin position="40"/>
        <end position="115"/>
    </location>
</feature>
<feature type="non-terminal residue">
    <location>
        <position position="119"/>
    </location>
</feature>
<sequence length="119" mass="13482">MSLLEAFAFSSWALGLGLSKVEQFQLSISTEVKKSIDIPCKISSTRFETDVIHWYRQKPNQALEHLIYIVSTKSAARRSMGKTSNKVEARKNSQTLTSILTIKSVEKEDMAVYYCAAWD</sequence>
<evidence type="ECO:0000255" key="1"/>
<evidence type="ECO:0000255" key="2">
    <source>
        <dbReference type="PROSITE-ProRule" id="PRU00114"/>
    </source>
</evidence>
<evidence type="ECO:0000303" key="3">
    <source>
    </source>
</evidence>
<evidence type="ECO:0000303" key="4">
    <source>
    </source>
</evidence>
<evidence type="ECO:0000303" key="5">
    <source>
    </source>
</evidence>
<evidence type="ECO:0000303" key="6">
    <source>
    </source>
</evidence>
<evidence type="ECO:0000303" key="7">
    <source>
    </source>
</evidence>
<evidence type="ECO:0000303" key="8">
    <source>
    </source>
</evidence>
<evidence type="ECO:0000303" key="9">
    <source ref="3"/>
</evidence>
<evidence type="ECO:0000305" key="10"/>
<evidence type="ECO:0000312" key="11">
    <source>
        <dbReference type="HGNC" id="HGNC:12285"/>
    </source>
</evidence>